<evidence type="ECO:0000255" key="1">
    <source>
        <dbReference type="HAMAP-Rule" id="MF_00302"/>
    </source>
</evidence>
<evidence type="ECO:0000256" key="2">
    <source>
        <dbReference type="SAM" id="MobiDB-lite"/>
    </source>
</evidence>
<gene>
    <name evidence="1" type="primary">clpS</name>
    <name type="ordered locus">BSUIS_A1217</name>
</gene>
<name>CLPS_BRUSI</name>
<dbReference type="EMBL" id="CP000911">
    <property type="protein sequence ID" value="ABY38268.1"/>
    <property type="molecule type" value="Genomic_DNA"/>
</dbReference>
<dbReference type="RefSeq" id="WP_002964297.1">
    <property type="nucleotide sequence ID" value="NC_010169.1"/>
</dbReference>
<dbReference type="SMR" id="B0CGW7"/>
<dbReference type="GeneID" id="97533580"/>
<dbReference type="KEGG" id="bmt:BSUIS_A1217"/>
<dbReference type="HOGENOM" id="CLU_134358_0_0_5"/>
<dbReference type="Proteomes" id="UP000008545">
    <property type="component" value="Chromosome I"/>
</dbReference>
<dbReference type="GO" id="GO:0030163">
    <property type="term" value="P:protein catabolic process"/>
    <property type="evidence" value="ECO:0007669"/>
    <property type="project" value="InterPro"/>
</dbReference>
<dbReference type="GO" id="GO:0006508">
    <property type="term" value="P:proteolysis"/>
    <property type="evidence" value="ECO:0007669"/>
    <property type="project" value="UniProtKB-UniRule"/>
</dbReference>
<dbReference type="FunFam" id="3.30.1390.10:FF:000002">
    <property type="entry name" value="ATP-dependent Clp protease adapter protein ClpS"/>
    <property type="match status" value="1"/>
</dbReference>
<dbReference type="Gene3D" id="3.30.1390.10">
    <property type="match status" value="1"/>
</dbReference>
<dbReference type="HAMAP" id="MF_00302">
    <property type="entry name" value="ClpS"/>
    <property type="match status" value="1"/>
</dbReference>
<dbReference type="InterPro" id="IPR022935">
    <property type="entry name" value="ClpS"/>
</dbReference>
<dbReference type="InterPro" id="IPR003769">
    <property type="entry name" value="ClpS_core"/>
</dbReference>
<dbReference type="InterPro" id="IPR014719">
    <property type="entry name" value="Ribosomal_bL12_C/ClpS-like"/>
</dbReference>
<dbReference type="NCBIfam" id="NF000669">
    <property type="entry name" value="PRK00033.1-2"/>
    <property type="match status" value="1"/>
</dbReference>
<dbReference type="NCBIfam" id="NF000672">
    <property type="entry name" value="PRK00033.1-5"/>
    <property type="match status" value="1"/>
</dbReference>
<dbReference type="PANTHER" id="PTHR33473:SF19">
    <property type="entry name" value="ATP-DEPENDENT CLP PROTEASE ADAPTER PROTEIN CLPS"/>
    <property type="match status" value="1"/>
</dbReference>
<dbReference type="PANTHER" id="PTHR33473">
    <property type="entry name" value="ATP-DEPENDENT CLP PROTEASE ADAPTER PROTEIN CLPS1, CHLOROPLASTIC"/>
    <property type="match status" value="1"/>
</dbReference>
<dbReference type="Pfam" id="PF02617">
    <property type="entry name" value="ClpS"/>
    <property type="match status" value="1"/>
</dbReference>
<dbReference type="SUPFAM" id="SSF54736">
    <property type="entry name" value="ClpS-like"/>
    <property type="match status" value="1"/>
</dbReference>
<proteinExistence type="inferred from homology"/>
<protein>
    <recommendedName>
        <fullName evidence="1">ATP-dependent Clp protease adapter protein ClpS</fullName>
    </recommendedName>
</protein>
<accession>B0CGW7</accession>
<sequence>MRRINTIMQGKTNGGNGPESGTVVVTRTQPKTRKPSLYRVLLLNDDYTPMEFVVHVLQRFFQKNLDDATRIMLHVHNHGVGECGVFTYEVAETKVSQVMDFARQNQHPLQCVMEKK</sequence>
<reference key="1">
    <citation type="submission" date="2007-12" db="EMBL/GenBank/DDBJ databases">
        <title>Brucella suis ATCC 23445 whole genome shotgun sequencing project.</title>
        <authorList>
            <person name="Setubal J.C."/>
            <person name="Bowns C."/>
            <person name="Boyle S."/>
            <person name="Crasta O.R."/>
            <person name="Czar M.J."/>
            <person name="Dharmanolla C."/>
            <person name="Gillespie J.J."/>
            <person name="Kenyon R.W."/>
            <person name="Lu J."/>
            <person name="Mane S."/>
            <person name="Mohapatra S."/>
            <person name="Nagrani S."/>
            <person name="Purkayastha A."/>
            <person name="Rajasimha H.K."/>
            <person name="Shallom J.M."/>
            <person name="Shallom S."/>
            <person name="Shukla M."/>
            <person name="Snyder E.E."/>
            <person name="Sobral B.W."/>
            <person name="Wattam A.R."/>
            <person name="Will R."/>
            <person name="Williams K."/>
            <person name="Yoo H."/>
            <person name="Bruce D."/>
            <person name="Detter C."/>
            <person name="Munk C."/>
            <person name="Brettin T.S."/>
        </authorList>
    </citation>
    <scope>NUCLEOTIDE SEQUENCE [LARGE SCALE GENOMIC DNA]</scope>
    <source>
        <strain>ATCC 23445 / NCTC 10510</strain>
    </source>
</reference>
<feature type="chain" id="PRO_1000079021" description="ATP-dependent Clp protease adapter protein ClpS">
    <location>
        <begin position="1"/>
        <end position="116"/>
    </location>
</feature>
<feature type="region of interest" description="Disordered" evidence="2">
    <location>
        <begin position="1"/>
        <end position="23"/>
    </location>
</feature>
<feature type="compositionally biased region" description="Polar residues" evidence="2">
    <location>
        <begin position="1"/>
        <end position="11"/>
    </location>
</feature>
<comment type="function">
    <text evidence="1">Involved in the modulation of the specificity of the ClpAP-mediated ATP-dependent protein degradation.</text>
</comment>
<comment type="subunit">
    <text evidence="1">Binds to the N-terminal domain of the chaperone ClpA.</text>
</comment>
<comment type="similarity">
    <text evidence="1">Belongs to the ClpS family.</text>
</comment>
<organism>
    <name type="scientific">Brucella suis (strain ATCC 23445 / NCTC 10510)</name>
    <dbReference type="NCBI Taxonomy" id="470137"/>
    <lineage>
        <taxon>Bacteria</taxon>
        <taxon>Pseudomonadati</taxon>
        <taxon>Pseudomonadota</taxon>
        <taxon>Alphaproteobacteria</taxon>
        <taxon>Hyphomicrobiales</taxon>
        <taxon>Brucellaceae</taxon>
        <taxon>Brucella/Ochrobactrum group</taxon>
        <taxon>Brucella</taxon>
    </lineage>
</organism>